<protein>
    <recommendedName>
        <fullName evidence="1">Lysine--tRNA ligase</fullName>
        <ecNumber evidence="1">6.1.1.6</ecNumber>
    </recommendedName>
    <alternativeName>
        <fullName evidence="1">Lysyl-tRNA synthetase</fullName>
        <shortName evidence="1">LysRS</shortName>
    </alternativeName>
</protein>
<keyword id="KW-0030">Aminoacyl-tRNA synthetase</keyword>
<keyword id="KW-0067">ATP-binding</keyword>
<keyword id="KW-0963">Cytoplasm</keyword>
<keyword id="KW-0436">Ligase</keyword>
<keyword id="KW-0460">Magnesium</keyword>
<keyword id="KW-0479">Metal-binding</keyword>
<keyword id="KW-0547">Nucleotide-binding</keyword>
<keyword id="KW-0648">Protein biosynthesis</keyword>
<name>SYK_CHLT2</name>
<comment type="catalytic activity">
    <reaction evidence="1">
        <text>tRNA(Lys) + L-lysine + ATP = L-lysyl-tRNA(Lys) + AMP + diphosphate</text>
        <dbReference type="Rhea" id="RHEA:20792"/>
        <dbReference type="Rhea" id="RHEA-COMP:9696"/>
        <dbReference type="Rhea" id="RHEA-COMP:9697"/>
        <dbReference type="ChEBI" id="CHEBI:30616"/>
        <dbReference type="ChEBI" id="CHEBI:32551"/>
        <dbReference type="ChEBI" id="CHEBI:33019"/>
        <dbReference type="ChEBI" id="CHEBI:78442"/>
        <dbReference type="ChEBI" id="CHEBI:78529"/>
        <dbReference type="ChEBI" id="CHEBI:456215"/>
        <dbReference type="EC" id="6.1.1.6"/>
    </reaction>
</comment>
<comment type="cofactor">
    <cofactor evidence="1">
        <name>Mg(2+)</name>
        <dbReference type="ChEBI" id="CHEBI:18420"/>
    </cofactor>
    <text evidence="1">Binds 3 Mg(2+) ions per subunit.</text>
</comment>
<comment type="subunit">
    <text evidence="1">Homodimer.</text>
</comment>
<comment type="subcellular location">
    <subcellularLocation>
        <location evidence="1">Cytoplasm</location>
    </subcellularLocation>
</comment>
<comment type="similarity">
    <text evidence="1">Belongs to the class-II aminoacyl-tRNA synthetase family.</text>
</comment>
<proteinExistence type="inferred from homology"/>
<accession>B0B907</accession>
<reference key="1">
    <citation type="journal article" date="2008" name="Genome Res.">
        <title>Chlamydia trachomatis: genome sequence analysis of lymphogranuloma venereum isolates.</title>
        <authorList>
            <person name="Thomson N.R."/>
            <person name="Holden M.T.G."/>
            <person name="Carder C."/>
            <person name="Lennard N."/>
            <person name="Lockey S.J."/>
            <person name="Marsh P."/>
            <person name="Skipp P."/>
            <person name="O'Connor C.D."/>
            <person name="Goodhead I."/>
            <person name="Norbertzcak H."/>
            <person name="Harris B."/>
            <person name="Ormond D."/>
            <person name="Rance R."/>
            <person name="Quail M.A."/>
            <person name="Parkhill J."/>
            <person name="Stephens R.S."/>
            <person name="Clarke I.N."/>
        </authorList>
    </citation>
    <scope>NUCLEOTIDE SEQUENCE [LARGE SCALE GENOMIC DNA]</scope>
    <source>
        <strain>ATCC VR-902B / DSM 19102 / 434/Bu</strain>
    </source>
</reference>
<evidence type="ECO:0000255" key="1">
    <source>
        <dbReference type="HAMAP-Rule" id="MF_00252"/>
    </source>
</evidence>
<dbReference type="EC" id="6.1.1.6" evidence="1"/>
<dbReference type="EMBL" id="AM884176">
    <property type="protein sequence ID" value="CAP03594.1"/>
    <property type="molecule type" value="Genomic_DNA"/>
</dbReference>
<dbReference type="RefSeq" id="WP_009873399.1">
    <property type="nucleotide sequence ID" value="NC_010287.1"/>
</dbReference>
<dbReference type="RefSeq" id="YP_001654241.1">
    <property type="nucleotide sequence ID" value="NC_010287.1"/>
</dbReference>
<dbReference type="SMR" id="B0B907"/>
<dbReference type="KEGG" id="ctb:CTL0150"/>
<dbReference type="PATRIC" id="fig|471472.4.peg.161"/>
<dbReference type="HOGENOM" id="CLU_008255_6_0_0"/>
<dbReference type="Proteomes" id="UP001154402">
    <property type="component" value="Chromosome"/>
</dbReference>
<dbReference type="GO" id="GO:0005829">
    <property type="term" value="C:cytosol"/>
    <property type="evidence" value="ECO:0007669"/>
    <property type="project" value="TreeGrafter"/>
</dbReference>
<dbReference type="GO" id="GO:0005524">
    <property type="term" value="F:ATP binding"/>
    <property type="evidence" value="ECO:0007669"/>
    <property type="project" value="UniProtKB-UniRule"/>
</dbReference>
<dbReference type="GO" id="GO:0004824">
    <property type="term" value="F:lysine-tRNA ligase activity"/>
    <property type="evidence" value="ECO:0007669"/>
    <property type="project" value="UniProtKB-UniRule"/>
</dbReference>
<dbReference type="GO" id="GO:0000287">
    <property type="term" value="F:magnesium ion binding"/>
    <property type="evidence" value="ECO:0007669"/>
    <property type="project" value="UniProtKB-UniRule"/>
</dbReference>
<dbReference type="GO" id="GO:0000049">
    <property type="term" value="F:tRNA binding"/>
    <property type="evidence" value="ECO:0007669"/>
    <property type="project" value="TreeGrafter"/>
</dbReference>
<dbReference type="GO" id="GO:0006430">
    <property type="term" value="P:lysyl-tRNA aminoacylation"/>
    <property type="evidence" value="ECO:0007669"/>
    <property type="project" value="UniProtKB-UniRule"/>
</dbReference>
<dbReference type="CDD" id="cd04322">
    <property type="entry name" value="LysRS_N"/>
    <property type="match status" value="1"/>
</dbReference>
<dbReference type="FunFam" id="2.40.50.140:FF:000024">
    <property type="entry name" value="Lysine--tRNA ligase"/>
    <property type="match status" value="1"/>
</dbReference>
<dbReference type="FunFam" id="3.30.930.10:FF:000165">
    <property type="entry name" value="Lysine--tRNA ligase"/>
    <property type="match status" value="1"/>
</dbReference>
<dbReference type="Gene3D" id="3.30.930.10">
    <property type="entry name" value="Bira Bifunctional Protein, Domain 2"/>
    <property type="match status" value="1"/>
</dbReference>
<dbReference type="Gene3D" id="2.40.50.140">
    <property type="entry name" value="Nucleic acid-binding proteins"/>
    <property type="match status" value="1"/>
</dbReference>
<dbReference type="HAMAP" id="MF_00252">
    <property type="entry name" value="Lys_tRNA_synth_class2"/>
    <property type="match status" value="1"/>
</dbReference>
<dbReference type="InterPro" id="IPR004364">
    <property type="entry name" value="Aa-tRNA-synt_II"/>
</dbReference>
<dbReference type="InterPro" id="IPR006195">
    <property type="entry name" value="aa-tRNA-synth_II"/>
</dbReference>
<dbReference type="InterPro" id="IPR045864">
    <property type="entry name" value="aa-tRNA-synth_II/BPL/LPL"/>
</dbReference>
<dbReference type="InterPro" id="IPR002313">
    <property type="entry name" value="Lys-tRNA-ligase_II"/>
</dbReference>
<dbReference type="InterPro" id="IPR044136">
    <property type="entry name" value="Lys-tRNA-ligase_II_N"/>
</dbReference>
<dbReference type="InterPro" id="IPR018149">
    <property type="entry name" value="Lys-tRNA-synth_II_C"/>
</dbReference>
<dbReference type="InterPro" id="IPR012340">
    <property type="entry name" value="NA-bd_OB-fold"/>
</dbReference>
<dbReference type="InterPro" id="IPR004365">
    <property type="entry name" value="NA-bd_OB_tRNA"/>
</dbReference>
<dbReference type="NCBIfam" id="TIGR00499">
    <property type="entry name" value="lysS_bact"/>
    <property type="match status" value="1"/>
</dbReference>
<dbReference type="NCBIfam" id="NF001756">
    <property type="entry name" value="PRK00484.1"/>
    <property type="match status" value="1"/>
</dbReference>
<dbReference type="PANTHER" id="PTHR42918:SF15">
    <property type="entry name" value="LYSINE--TRNA LIGASE, CHLOROPLASTIC_MITOCHONDRIAL"/>
    <property type="match status" value="1"/>
</dbReference>
<dbReference type="PANTHER" id="PTHR42918">
    <property type="entry name" value="LYSYL-TRNA SYNTHETASE"/>
    <property type="match status" value="1"/>
</dbReference>
<dbReference type="Pfam" id="PF00152">
    <property type="entry name" value="tRNA-synt_2"/>
    <property type="match status" value="1"/>
</dbReference>
<dbReference type="Pfam" id="PF01336">
    <property type="entry name" value="tRNA_anti-codon"/>
    <property type="match status" value="1"/>
</dbReference>
<dbReference type="PRINTS" id="PR00982">
    <property type="entry name" value="TRNASYNTHLYS"/>
</dbReference>
<dbReference type="SUPFAM" id="SSF55681">
    <property type="entry name" value="Class II aaRS and biotin synthetases"/>
    <property type="match status" value="1"/>
</dbReference>
<dbReference type="SUPFAM" id="SSF50249">
    <property type="entry name" value="Nucleic acid-binding proteins"/>
    <property type="match status" value="1"/>
</dbReference>
<dbReference type="PROSITE" id="PS50862">
    <property type="entry name" value="AA_TRNA_LIGASE_II"/>
    <property type="match status" value="1"/>
</dbReference>
<gene>
    <name evidence="1" type="primary">lysS</name>
    <name type="ordered locus">CTL0150</name>
</gene>
<sequence length="526" mass="60076">MSVEVEYLQHEDYLYRTSKLKEIRDLGINPYPYQYTDCLEVQEIRNQFVDNELGDSEAAFRKETPKVRFAGRLVLFRSMGKNAFGQILDNDAKIQVMFNRDFSAVAGLAADAGISPIKFIEKKLDLGDILGLEGYLFFTHSGELTVLVETVTLLCKSLISLPDKHAGLADKEIRYRKRWADLISSEDVRKTFLTRSRILKLIREYMDQQSFLEVETPILQTVYGGAEATPFVTTLQALHAEMFLRISLEIALKKLLVGGMSRVYEIGKVFRNEGIDRTHNPEFTMIEAYAAYWDYNDVMKCVENLVEYIVRALNNGETQVQYSHLKSGPQVVDFKAPWIRMTMKESISVYGGVDVDLHADHELRKILETQTSLPEKTYVHASRGELIALLFDELVCDKLIAPHHITDHPLETTPLCKTLRSGDETLVERFESFCLGKELCNAYSELNDPLQQRKLLEEQMRKKALNPDSEYHPIDEEFLEALCQGMPPAGGFGIGIDRLVMMLTDAASIRDVLFFPVMRRIEAKKD</sequence>
<organism>
    <name type="scientific">Chlamydia trachomatis serovar L2 (strain ATCC VR-902B / DSM 19102 / 434/Bu)</name>
    <dbReference type="NCBI Taxonomy" id="471472"/>
    <lineage>
        <taxon>Bacteria</taxon>
        <taxon>Pseudomonadati</taxon>
        <taxon>Chlamydiota</taxon>
        <taxon>Chlamydiia</taxon>
        <taxon>Chlamydiales</taxon>
        <taxon>Chlamydiaceae</taxon>
        <taxon>Chlamydia/Chlamydophila group</taxon>
        <taxon>Chlamydia</taxon>
    </lineage>
</organism>
<feature type="chain" id="PRO_1000101107" description="Lysine--tRNA ligase">
    <location>
        <begin position="1"/>
        <end position="526"/>
    </location>
</feature>
<feature type="binding site" evidence="1">
    <location>
        <position position="431"/>
    </location>
    <ligand>
        <name>Mg(2+)</name>
        <dbReference type="ChEBI" id="CHEBI:18420"/>
        <label>1</label>
    </ligand>
</feature>
<feature type="binding site" evidence="1">
    <location>
        <position position="438"/>
    </location>
    <ligand>
        <name>Mg(2+)</name>
        <dbReference type="ChEBI" id="CHEBI:18420"/>
        <label>1</label>
    </ligand>
</feature>
<feature type="binding site" evidence="1">
    <location>
        <position position="438"/>
    </location>
    <ligand>
        <name>Mg(2+)</name>
        <dbReference type="ChEBI" id="CHEBI:18420"/>
        <label>2</label>
    </ligand>
</feature>